<organism>
    <name type="scientific">Bos taurus</name>
    <name type="common">Bovine</name>
    <dbReference type="NCBI Taxonomy" id="9913"/>
    <lineage>
        <taxon>Eukaryota</taxon>
        <taxon>Metazoa</taxon>
        <taxon>Chordata</taxon>
        <taxon>Craniata</taxon>
        <taxon>Vertebrata</taxon>
        <taxon>Euteleostomi</taxon>
        <taxon>Mammalia</taxon>
        <taxon>Eutheria</taxon>
        <taxon>Laurasiatheria</taxon>
        <taxon>Artiodactyla</taxon>
        <taxon>Ruminantia</taxon>
        <taxon>Pecora</taxon>
        <taxon>Bovidae</taxon>
        <taxon>Bovinae</taxon>
        <taxon>Bos</taxon>
    </lineage>
</organism>
<reference key="1">
    <citation type="submission" date="2007-07" db="EMBL/GenBank/DDBJ databases">
        <authorList>
            <consortium name="NIH - Mammalian Gene Collection (MGC) project"/>
        </authorList>
    </citation>
    <scope>NUCLEOTIDE SEQUENCE [LARGE SCALE MRNA]</scope>
    <source>
        <strain>Hereford</strain>
        <tissue>Ascending colon</tissue>
    </source>
</reference>
<dbReference type="EMBL" id="BC151387">
    <property type="protein sequence ID" value="AAI51388.1"/>
    <property type="molecule type" value="mRNA"/>
</dbReference>
<dbReference type="RefSeq" id="NP_001095647.1">
    <property type="nucleotide sequence ID" value="NM_001102177.1"/>
</dbReference>
<dbReference type="RefSeq" id="XP_024840763.1">
    <property type="nucleotide sequence ID" value="XM_024984995.2"/>
</dbReference>
<dbReference type="SMR" id="A7MB80"/>
<dbReference type="FunCoup" id="A7MB80">
    <property type="interactions" value="3259"/>
</dbReference>
<dbReference type="STRING" id="9913.ENSBTAP00000062690"/>
<dbReference type="PaxDb" id="9913-ENSBTAP00000012904"/>
<dbReference type="Ensembl" id="ENSBTAT00000012904.6">
    <property type="protein sequence ID" value="ENSBTAP00000012904.5"/>
    <property type="gene ID" value="ENSBTAG00000009780.7"/>
</dbReference>
<dbReference type="GeneID" id="534669"/>
<dbReference type="KEGG" id="bta:534669"/>
<dbReference type="CTD" id="2969"/>
<dbReference type="VEuPathDB" id="HostDB:ENSBTAG00000009780"/>
<dbReference type="VGNC" id="VGNC:29699">
    <property type="gene designation" value="GTF2I"/>
</dbReference>
<dbReference type="eggNOG" id="ENOG502QWD0">
    <property type="taxonomic scope" value="Eukaryota"/>
</dbReference>
<dbReference type="GeneTree" id="ENSGT00940000160349"/>
<dbReference type="HOGENOM" id="CLU_011773_0_0_1"/>
<dbReference type="InParanoid" id="A7MB80"/>
<dbReference type="OrthoDB" id="10072451at2759"/>
<dbReference type="TreeFam" id="TF352524"/>
<dbReference type="Proteomes" id="UP000009136">
    <property type="component" value="Chromosome 25"/>
</dbReference>
<dbReference type="Bgee" id="ENSBTAG00000009780">
    <property type="expression patterns" value="Expressed in thyroid gland and 109 other cell types or tissues"/>
</dbReference>
<dbReference type="GO" id="GO:0005737">
    <property type="term" value="C:cytoplasm"/>
    <property type="evidence" value="ECO:0007669"/>
    <property type="project" value="UniProtKB-SubCell"/>
</dbReference>
<dbReference type="GO" id="GO:0005634">
    <property type="term" value="C:nucleus"/>
    <property type="evidence" value="ECO:0000318"/>
    <property type="project" value="GO_Central"/>
</dbReference>
<dbReference type="GO" id="GO:0003677">
    <property type="term" value="F:DNA binding"/>
    <property type="evidence" value="ECO:0007669"/>
    <property type="project" value="UniProtKB-KW"/>
</dbReference>
<dbReference type="GO" id="GO:0003700">
    <property type="term" value="F:DNA-binding transcription factor activity"/>
    <property type="evidence" value="ECO:0000318"/>
    <property type="project" value="GO_Central"/>
</dbReference>
<dbReference type="GO" id="GO:0006366">
    <property type="term" value="P:transcription by RNA polymerase II"/>
    <property type="evidence" value="ECO:0007669"/>
    <property type="project" value="InterPro"/>
</dbReference>
<dbReference type="FunFam" id="3.90.1460.10:FF:000002">
    <property type="entry name" value="General transcription factor II-I isoform 1"/>
    <property type="match status" value="1"/>
</dbReference>
<dbReference type="FunFam" id="3.90.1460.10:FF:000001">
    <property type="entry name" value="general transcription factor II-I isoform X1"/>
    <property type="match status" value="3"/>
</dbReference>
<dbReference type="FunFam" id="3.90.1460.10:FF:000003">
    <property type="entry name" value="general transcription factor II-I isoform X1"/>
    <property type="match status" value="1"/>
</dbReference>
<dbReference type="FunFam" id="3.90.1460.10:FF:000004">
    <property type="entry name" value="general transcription factor II-I isoform X1"/>
    <property type="match status" value="1"/>
</dbReference>
<dbReference type="Gene3D" id="3.90.1460.10">
    <property type="entry name" value="GTF2I-like"/>
    <property type="match status" value="6"/>
</dbReference>
<dbReference type="InterPro" id="IPR004212">
    <property type="entry name" value="GTF2I"/>
</dbReference>
<dbReference type="InterPro" id="IPR036647">
    <property type="entry name" value="GTF2I-like_rpt_sf"/>
</dbReference>
<dbReference type="InterPro" id="IPR016659">
    <property type="entry name" value="TF_II-I"/>
</dbReference>
<dbReference type="PANTHER" id="PTHR46304:SF2">
    <property type="entry name" value="GENERAL TRANSCRIPTION FACTOR II-I"/>
    <property type="match status" value="1"/>
</dbReference>
<dbReference type="PANTHER" id="PTHR46304">
    <property type="entry name" value="GENERAL TRANSCRIPTION FACTOR II-I REPEAT DOMAIN-CONTAINING PROTEIN 1"/>
    <property type="match status" value="1"/>
</dbReference>
<dbReference type="Pfam" id="PF02946">
    <property type="entry name" value="GTF2I"/>
    <property type="match status" value="6"/>
</dbReference>
<dbReference type="PIRSF" id="PIRSF016441">
    <property type="entry name" value="TF_II-I"/>
    <property type="match status" value="1"/>
</dbReference>
<dbReference type="SUPFAM" id="SSF117773">
    <property type="entry name" value="GTF2I-like repeat"/>
    <property type="match status" value="6"/>
</dbReference>
<dbReference type="PROSITE" id="PS51139">
    <property type="entry name" value="GTF2I"/>
    <property type="match status" value="6"/>
</dbReference>
<sequence length="978" mass="110125">MAQVAVSTLPVEDEESSESRMVVTFLMSALESMCKELAKSKAEVACIAVYETDVFVVGTERGRAFVNTRKDFQKDFVKYCVEEEEKAAEMHKMKSTAQANRMSVDAVEIETLRKTVEDYFCFCYGKALGKSTVVPVPYEKMLRDQSAVVVQGLPEGVAFKHPENYDLATLKWILENKAGISFIIKRPFLEPKKHLGGRVMVTDAERSMISPSGSCGPVKVKTEPSEDSGISLEMAAVTVKEESEDPDYYQYNIQAGPSETDDVDDKLPLSKSLQGSHHSSEGNEGTEMEVPAEDDDYPPPAKRPKSSEPPQPPVTEPANAGKRKVREFNFEKWNARITDLRKQVEELFERKYAQAIKAKGPVTIPYPLFQSHVEDLYVEGLPEGIPFRRPSTYGIPRLERILLAKERIRFVIKKHELLNSTREDLQLDKPASGVKEEWYARITKLRKMVDQLFCKKFAEALGSTEAKAVPYQKFEAHPNDLYVEGLPENIPFRSPSWYGIPRLEKIIQVGNRIKFVIKRPELLTHSTTEVTQPRTNTPVKEDWNVRITKLRKQVEEIFNLKFAQALGLTEAVKVPYPVFESNPEFLYVEGLPEGIPFRSPTWFGIPRLERIVRGSNKIKFVVKKPELVISYLPPGMASKINTKALQSPKRPRSPGSNSKVPEIEVTVEGPNNSNPQTSAVRTPTQTNGSNVPFKPRGREFSFEAWNAKITDLKQKVENLFNEKCGEALGLKQAVKVPFALFESFPEDFYVEGLPEGVPFRRPSTFGIPRLEKILRNKAKIKFIIKKPEMFETAIKESTSSSKSPPRKINSSPSVNTTASGVEDLNIIQVTIPDDDNERLSKVEKARQLREQVNDLFSRKFGEAIGMGFPVKVPYRKITINPGCVVVDGMPPGVSFKAPSYLEISSMRRILDSAEFIKFTVIRPFPGLVINNQLVDQNESEGPVIQESAEPTQLEVPATEEIKETDGNSQIKQEPDPTW</sequence>
<keyword id="KW-0007">Acetylation</keyword>
<keyword id="KW-0963">Cytoplasm</keyword>
<keyword id="KW-0238">DNA-binding</keyword>
<keyword id="KW-1017">Isopeptide bond</keyword>
<keyword id="KW-0539">Nucleus</keyword>
<keyword id="KW-0597">Phosphoprotein</keyword>
<keyword id="KW-1185">Reference proteome</keyword>
<keyword id="KW-0677">Repeat</keyword>
<keyword id="KW-0804">Transcription</keyword>
<keyword id="KW-0805">Transcription regulation</keyword>
<keyword id="KW-0832">Ubl conjugation</keyword>
<name>GTF2I_BOVIN</name>
<protein>
    <recommendedName>
        <fullName>General transcription factor II-I</fullName>
        <shortName>GTFII-I</shortName>
        <shortName>TFII-I</shortName>
    </recommendedName>
</protein>
<evidence type="ECO:0000250" key="1"/>
<evidence type="ECO:0000250" key="2">
    <source>
        <dbReference type="UniProtKB" id="P78347"/>
    </source>
</evidence>
<evidence type="ECO:0000250" key="3">
    <source>
        <dbReference type="UniProtKB" id="Q9ESZ8"/>
    </source>
</evidence>
<evidence type="ECO:0000255" key="4"/>
<evidence type="ECO:0000255" key="5">
    <source>
        <dbReference type="PROSITE-ProRule" id="PRU00484"/>
    </source>
</evidence>
<evidence type="ECO:0000256" key="6">
    <source>
        <dbReference type="SAM" id="MobiDB-lite"/>
    </source>
</evidence>
<evidence type="ECO:0000305" key="7"/>
<comment type="function">
    <text evidence="1">Interacts with the basal transcription machinery by coordinating the formation of a multiprotein complex at the C-FOS promoter, and linking specific signal responsive activator complexes. Promotes the formation of stable high-order complexes of SRF and PHOX1 and interacts cooperatively with PHOX1 to promote serum-inducible transcription of a reporter gene deriven by the C-FOS serum response element (SRE). Acts as a coregulator for USF1 by binding independently two promoter elements, a pyrimidine-rich initiator (Inr) and an upstream E-box. Required for the formation of functional ARID3A DNA-binding complexes and for activation of immunoglobulin heavy-chain transcription upon B-lymphocyte activation (By similarity).</text>
</comment>
<comment type="subunit">
    <text evidence="1 7">Homodimer (Potential). Interacts with SRF and PHOX1. Binds a pyrimidine-rich initiator (Inr) and a recognition site (E-box) for upstream stimulatory factor 1 (USF1). Associates with the PH domain of Bruton's tyrosine kinase (BTK). May be a component of a BHC histone deacetylase complex that contains HDAC1, HDAC2, HMG20B/BRAF35, KDM1A, RCOR1/CoREST, PHF21A/BHC80, ZMYM2, ZNF217, ZMYM3, GSE1 and GTF2I. Interacts with ARID3A. Interacts with isoform beta of PRKG1 (By similarity).</text>
</comment>
<comment type="subcellular location">
    <subcellularLocation>
        <location>Cytoplasm</location>
    </subcellularLocation>
    <subcellularLocation>
        <location>Nucleus</location>
    </subcellularLocation>
    <text evidence="1">Colocalizes with BTK in the cytoplasm.</text>
</comment>
<comment type="PTM">
    <text>Transiently phosphorylated on tyrosine residues by BTK in response to B-cell receptor stimulation. Phosphorylation on Tyr-248 and Tyr-377, and perhaps, on Tyr-482 contributes to BTK-mediated transcriptional activation.</text>
</comment>
<comment type="PTM">
    <text>Sumoylated.</text>
</comment>
<comment type="similarity">
    <text evidence="5">Belongs to the TFII-I family.</text>
</comment>
<feature type="initiator methionine" description="Removed" evidence="2">
    <location>
        <position position="1"/>
    </location>
</feature>
<feature type="chain" id="PRO_0000343748" description="General transcription factor II-I">
    <location>
        <begin position="2"/>
        <end position="978"/>
    </location>
</feature>
<feature type="repeat" description="GTF2I-like 1">
    <location>
        <begin position="103"/>
        <end position="197"/>
    </location>
</feature>
<feature type="repeat" description="GTF2I-like 2">
    <location>
        <begin position="331"/>
        <end position="425"/>
    </location>
</feature>
<feature type="repeat" description="GTF2I-like 3">
    <location>
        <begin position="436"/>
        <end position="530"/>
    </location>
</feature>
<feature type="repeat" description="GTF2I-like 4">
    <location>
        <begin position="541"/>
        <end position="635"/>
    </location>
</feature>
<feature type="repeat" description="GTF2I-like 5">
    <location>
        <begin position="703"/>
        <end position="797"/>
    </location>
</feature>
<feature type="repeat" description="GTF2I-like 6">
    <location>
        <begin position="839"/>
        <end position="933"/>
    </location>
</feature>
<feature type="region of interest" description="Disordered" evidence="6">
    <location>
        <begin position="208"/>
        <end position="323"/>
    </location>
</feature>
<feature type="region of interest" description="Disordered" evidence="6">
    <location>
        <begin position="641"/>
        <end position="660"/>
    </location>
</feature>
<feature type="region of interest" description="Disordered" evidence="6">
    <location>
        <begin position="666"/>
        <end position="693"/>
    </location>
</feature>
<feature type="region of interest" description="Disordered" evidence="6">
    <location>
        <begin position="795"/>
        <end position="816"/>
    </location>
</feature>
<feature type="region of interest" description="Disordered" evidence="6">
    <location>
        <begin position="939"/>
        <end position="978"/>
    </location>
</feature>
<feature type="short sequence motif" description="Nuclear localization signal" evidence="4">
    <location>
        <begin position="299"/>
        <end position="306"/>
    </location>
</feature>
<feature type="compositionally biased region" description="Acidic residues" evidence="6">
    <location>
        <begin position="284"/>
        <end position="297"/>
    </location>
</feature>
<feature type="compositionally biased region" description="Polar residues" evidence="6">
    <location>
        <begin position="669"/>
        <end position="690"/>
    </location>
</feature>
<feature type="modified residue" description="N-acetylalanine" evidence="2">
    <location>
        <position position="2"/>
    </location>
</feature>
<feature type="modified residue" description="Phosphoserine" evidence="2">
    <location>
        <position position="19"/>
    </location>
</feature>
<feature type="modified residue" description="Phosphoserine" evidence="2">
    <location>
        <position position="103"/>
    </location>
</feature>
<feature type="modified residue" description="N6-acetyllysine; alternate" evidence="3">
    <location>
        <position position="130"/>
    </location>
</feature>
<feature type="modified residue" description="Phosphoserine" evidence="2">
    <location>
        <position position="207"/>
    </location>
</feature>
<feature type="modified residue" description="Phosphoserine" evidence="2">
    <location>
        <position position="210"/>
    </location>
</feature>
<feature type="modified residue" description="Phosphoserine" evidence="2">
    <location>
        <position position="214"/>
    </location>
</feature>
<feature type="modified residue" description="Phosphotyrosine; by BTK" evidence="2">
    <location>
        <position position="248"/>
    </location>
</feature>
<feature type="modified residue" description="N6-acetyllysine; alternate" evidence="3">
    <location>
        <position position="332"/>
    </location>
</feature>
<feature type="modified residue" description="Phosphotyrosine; by BTK" evidence="2">
    <location>
        <position position="377"/>
    </location>
</feature>
<feature type="modified residue" description="Phosphoserine; by PKG/PRKG1" evidence="2">
    <location>
        <position position="391"/>
    </location>
</feature>
<feature type="modified residue" description="N6-acetyllysine; alternate" evidence="3">
    <location>
        <position position="429"/>
    </location>
</feature>
<feature type="modified residue" description="Phosphotyrosine; by BTK" evidence="2">
    <location>
        <position position="482"/>
    </location>
</feature>
<feature type="modified residue" description="Phosphoserine" evidence="2">
    <location>
        <position position="496"/>
    </location>
</feature>
<feature type="modified residue" description="Phosphothreonine" evidence="3">
    <location>
        <position position="535"/>
    </location>
</feature>
<feature type="modified residue" description="Phosphothreonine" evidence="2">
    <location>
        <position position="537"/>
    </location>
</feature>
<feature type="modified residue" description="Phosphoserine" evidence="2">
    <location>
        <position position="647"/>
    </location>
</feature>
<feature type="modified residue" description="Phosphoserine" evidence="2">
    <location>
        <position position="653"/>
    </location>
</feature>
<feature type="modified residue" description="N6-acetyllysine; alternate" evidence="3">
    <location>
        <position position="694"/>
    </location>
</feature>
<feature type="modified residue" description="Phosphoserine" evidence="2">
    <location>
        <position position="701"/>
    </location>
</feature>
<feature type="modified residue" description="Phosphoserine; by PKG/PRKG1" evidence="2">
    <location>
        <position position="763"/>
    </location>
</feature>
<feature type="modified residue" description="Phosphoserine" evidence="2">
    <location>
        <position position="803"/>
    </location>
</feature>
<feature type="cross-link" description="Glycyl lysine isopeptide (Lys-Gly) (interchain with G-Cter in SUMO2)" evidence="2">
    <location>
        <position position="35"/>
    </location>
</feature>
<feature type="cross-link" description="Glycyl lysine isopeptide (Lys-Gly) (interchain with G-Cter in SUMO2)" evidence="2">
    <location>
        <position position="86"/>
    </location>
</feature>
<feature type="cross-link" description="Glycyl lysine isopeptide (Lys-Gly) (interchain with G-Cter in SUMO2)" evidence="2">
    <location>
        <position position="92"/>
    </location>
</feature>
<feature type="cross-link" description="Glycyl lysine isopeptide (Lys-Gly) (interchain with G-Cter in SUMO2)" evidence="2">
    <location>
        <position position="94"/>
    </location>
</feature>
<feature type="cross-link" description="Glycyl lysine isopeptide (Lys-Gly) (interchain with G-Cter in SUMO2); alternate" evidence="2">
    <location>
        <position position="130"/>
    </location>
</feature>
<feature type="cross-link" description="Glycyl lysine isopeptide (Lys-Gly) (interchain with G-Cter in SUMO2)" evidence="2">
    <location>
        <position position="140"/>
    </location>
</feature>
<feature type="cross-link" description="Glycyl lysine isopeptide (Lys-Gly) (interchain with G-Cter in SUMO2)" evidence="2">
    <location>
        <position position="185"/>
    </location>
</feature>
<feature type="cross-link" description="Glycyl lysine isopeptide (Lys-Gly) (interchain with G-Cter in SUMO2)" evidence="2">
    <location>
        <position position="219"/>
    </location>
</feature>
<feature type="cross-link" description="Glycyl lysine isopeptide (Lys-Gly) (interchain with G-Cter in SUMO1); alternate" evidence="2">
    <location>
        <position position="221"/>
    </location>
</feature>
<feature type="cross-link" description="Glycyl lysine isopeptide (Lys-Gly) (interchain with G-Cter in SUMO2); alternate" evidence="2">
    <location>
        <position position="221"/>
    </location>
</feature>
<feature type="cross-link" description="Glycyl lysine isopeptide (Lys-Gly) (interchain with G-Cter in SUMO2)" evidence="2">
    <location>
        <position position="305"/>
    </location>
</feature>
<feature type="cross-link" description="Glycyl lysine isopeptide (Lys-Gly) (interchain with G-Cter in SUMO2)" evidence="2">
    <location>
        <position position="322"/>
    </location>
</feature>
<feature type="cross-link" description="Glycyl lysine isopeptide (Lys-Gly) (interchain with G-Cter in SUMO2); alternate" evidence="2">
    <location>
        <position position="332"/>
    </location>
</feature>
<feature type="cross-link" description="Glycyl lysine isopeptide (Lys-Gly) (interchain with G-Cter in SUMO2)" evidence="2">
    <location>
        <position position="359"/>
    </location>
</feature>
<feature type="cross-link" description="Glycyl lysine isopeptide (Lys-Gly) (interchain with G-Cter in SUMO2)" evidence="2">
    <location>
        <position position="414"/>
    </location>
</feature>
<feature type="cross-link" description="Glycyl lysine isopeptide (Lys-Gly) (interchain with G-Cter in SUMO2); alternate" evidence="2">
    <location>
        <position position="429"/>
    </location>
</feature>
<feature type="cross-link" description="Glycyl lysine isopeptide (Lys-Gly) (interchain with G-Cter in SUMO2)" evidence="2">
    <location>
        <position position="435"/>
    </location>
</feature>
<feature type="cross-link" description="Glycyl lysine isopeptide (Lys-Gly) (interchain with G-Cter in SUMO2)" evidence="2">
    <location>
        <position position="467"/>
    </location>
</feature>
<feature type="cross-link" description="Glycyl lysine isopeptide (Lys-Gly) (interchain with G-Cter in SUMO2)" evidence="2">
    <location>
        <position position="473"/>
    </location>
</feature>
<feature type="cross-link" description="Glycyl lysine isopeptide (Lys-Gly) (interchain with G-Cter in SUMO2)" evidence="2">
    <location>
        <position position="505"/>
    </location>
</feature>
<feature type="cross-link" description="Glycyl lysine isopeptide (Lys-Gly) (interchain with G-Cter in SUMO2)" evidence="2">
    <location>
        <position position="540"/>
    </location>
</feature>
<feature type="cross-link" description="Glycyl lysine isopeptide (Lys-Gly) (interchain with G-Cter in SUMO2)" evidence="2">
    <location>
        <position position="639"/>
    </location>
</feature>
<feature type="cross-link" description="Glycyl lysine isopeptide (Lys-Gly) (interchain with G-Cter in SUMO2)" evidence="2">
    <location>
        <position position="643"/>
    </location>
</feature>
<feature type="cross-link" description="Glycyl lysine isopeptide (Lys-Gly) (interchain with G-Cter in SUMO2)" evidence="2">
    <location>
        <position position="649"/>
    </location>
</feature>
<feature type="cross-link" description="Glycyl lysine isopeptide (Lys-Gly) (interchain with G-Cter in SUMO2)" evidence="2">
    <location>
        <position position="659"/>
    </location>
</feature>
<feature type="cross-link" description="Glycyl lysine isopeptide (Lys-Gly) (interchain with G-Cter in SUMO2); alternate" evidence="2">
    <location>
        <position position="694"/>
    </location>
</feature>
<feature type="cross-link" description="Glycyl lysine isopeptide (Lys-Gly) (interchain with G-Cter in SUMO2)" evidence="2">
    <location>
        <position position="795"/>
    </location>
</feature>
<feature type="cross-link" description="Glycyl lysine isopeptide (Lys-Gly) (interchain with G-Cter in SUMO2)" evidence="2">
    <location>
        <position position="807"/>
    </location>
</feature>
<feature type="cross-link" description="Glycyl lysine isopeptide (Lys-Gly) (interchain with G-Cter in SUMO2)" evidence="2">
    <location>
        <position position="841"/>
    </location>
</feature>
<feature type="cross-link" description="Glycyl lysine isopeptide (Lys-Gly) (interchain with G-Cter in SUMO2)" evidence="2">
    <location>
        <position position="844"/>
    </location>
</feature>
<feature type="cross-link" description="Glycyl lysine isopeptide (Lys-Gly) (interchain with G-Cter in SUMO2)" evidence="2">
    <location>
        <position position="859"/>
    </location>
</feature>
<feature type="cross-link" description="Glycyl lysine isopeptide (Lys-Gly) (interchain with G-Cter in SUMO2)" evidence="2">
    <location>
        <position position="871"/>
    </location>
</feature>
<feature type="cross-link" description="Glycyl lysine isopeptide (Lys-Gly) (interchain with G-Cter in SUMO1); alternate" evidence="2">
    <location>
        <position position="971"/>
    </location>
</feature>
<feature type="cross-link" description="Glycyl lysine isopeptide (Lys-Gly) (interchain with G-Cter in SUMO2); alternate" evidence="2">
    <location>
        <position position="971"/>
    </location>
</feature>
<gene>
    <name type="primary">GTF2I</name>
</gene>
<proteinExistence type="evidence at transcript level"/>
<accession>A7MB80</accession>